<evidence type="ECO:0000250" key="1"/>
<evidence type="ECO:0000250" key="2">
    <source>
        <dbReference type="UniProtKB" id="Q62770"/>
    </source>
</evidence>
<evidence type="ECO:0000255" key="3"/>
<evidence type="ECO:0000255" key="4">
    <source>
        <dbReference type="PROSITE-ProRule" id="PRU00041"/>
    </source>
</evidence>
<evidence type="ECO:0000255" key="5">
    <source>
        <dbReference type="PROSITE-ProRule" id="PRU00226"/>
    </source>
</evidence>
<evidence type="ECO:0000255" key="6">
    <source>
        <dbReference type="PROSITE-ProRule" id="PRU00587"/>
    </source>
</evidence>
<evidence type="ECO:0000255" key="7">
    <source>
        <dbReference type="PROSITE-ProRule" id="PRU00588"/>
    </source>
</evidence>
<evidence type="ECO:0000256" key="8">
    <source>
        <dbReference type="SAM" id="MobiDB-lite"/>
    </source>
</evidence>
<evidence type="ECO:0000269" key="9">
    <source>
    </source>
</evidence>
<evidence type="ECO:0000305" key="10"/>
<proteinExistence type="evidence at protein level"/>
<gene>
    <name type="primary">UNC13C</name>
</gene>
<sequence length="2214" mass="250911">MVANFFKSLILPYIHKLCKGMFTKKLGNTNKNKEYRQQKKDQDFPTAGQTKSPKFSYTFKSTVKKIAKCSSTHNLSTEEDEASKEFSLSPTFSYRVAIANGLQKNAKVTNSDNEDLLQELSSIESSYSESLNELRSSTENQAQSTHTMPVRRNRKSSSSLAPSEGSSDGERTLHGLKLGALRKLRKWKKSQECVSSDSELSTMKKSWGIRSKSLDRTVRNPKTNALEPGFSSSGCISQTHDVMEMIFKELQGISQIETELSELRGHVNALKHSIDEISSSVEVVQSEIEQLRTGFVQSRRETRDIHDYIKHLGHMGSKASLRFLNVTEERFEYVESVVYQILIDKMGFSDAPNAIKIEFAQRIGHQRDCPNAKPRPILVYFETPQQRDSVLKKSYKLKGTGIGISTDILTHDIRERKEKGIPSSQTYESMAIKLSTPEPKIKKNNWQSPDDSDEDLESDLNRNSYAVLSKSELLTKGSTSKPSSKSHSARSKNKTANSSRISNKSDYDKISSQLPESDILEKQTTTHYADATPLWHSQSDFFTAKLSRSESDFSKLCQSYSEDFSENQFFTRTNGSSLLSSSDRELWQRKQEGTATLYDSPKDQHLNGGVQGIQGQTETENTETVDSGMSNGMVCASGDRSHYSDSQLSLHEDLSPWKEWNQGADLGLDSSTQEGFDYETNSLFDQQLDVYNKDLEYLGKCHSDLQDDSESYDLTQDDNSSPCPGLDNEPQGQWVGQYDSYQGANSNELYQNQNQLSMMYRSQSELQSDDSEDAPPKSWHSRLSIDLSDKTFSFPKFGSTLQRAKSALEVVWNKSTQSLSGYEDSGSSLMGRFRTLSQSTANESSTTLDSDVYTEPYYYKAEDEEDYTEPVADNETDYVEVMEQVLAKLENRTSITETDEQMQAYDHLSYETPYETPQDEGYDGPADDMVSEEGLEPLNETSAEMEIREDENQNIPEQPVEITKPKRIRPSFKEAALRAYKKQMAELEEKILAGDSSSVDEKARIVSGNDLDASKFSALQVCGGAGGGLYGIDSMPDLRRKKTLPIVRDVAMTLAARKSGLSLAMVIRTSLNNEELKMHVFKKTLQALIYPMSSTIPHNFEVWTATTPTYCYECEGLLWGIARQGMKCLECGVKCHEKCQDLLNADCLQRAAEKSSKHGAEDKTQTIITAMKERMKIREKNRPEVFEVIQEMFQISKEDFVQFTKAAKQSVLDGTSKWSAKITITVVSAQGLQAKDKTGSSDPYVTVQVGKNKRRTKTIFGNLNPVWDEKFYFECHNSTDRIKVRVWDEDDDIKSRVKQHFKKESDDFLGQTIVEVRTLSGEMDVWYNLEKRTDKSAVSGAIRLKINVEIKGEEKVAPYHIQYTCLHENLFHYLTEVKSNGGVKIPEVKGDEAWKVFFDDASQEIVDEFAMRYGIESIYQAMTHFSCLSSKYMCPGVPAVMSTLLANINAFYAHTTVSTNIQVSASDRFAATNFGREKFIKLLDQLHNSLRIDLSKYRENFPASNTERLQDLKSTVDLLTSITFFRMKVLELQSPPKASMVVKDCVRACLDSTYKYIFDNCHELYSQLTDPSKKQDIPREDQGPTTKNLDFWPQLITLMVTIIDEDKTAYTPVLNQFPQELNMGKISAEIMWTLFALDMKYALEEHENQRLCKSTDYMNLHFKVKWFYNEYVRELPAFKDAVPEYSLWFEPFVMQWLDENEDVSMEFLHGALGRDKKDGFQQTSEHALFSCSVVDVFAQLNQSFEIIKKLECPNPEALSHLMRRFAKTINKVLLQYAAIVSSDFSSHCDKENVPCILMNNIQQLRVQLEKMFESMGGKELDSEASTILKELQVKLSGVLDELSVTYGESFQVIIEECIKQMSFELNQMRANGNTTSNKNSAAMDAEIVLRSLMDFLDKTLSLSAKICEKTVLKRVLKELWKLVLNKIEKQIVLPPLTDQTGPQMIFIAAKDLGQLSKLKEHMIREDARGLTPRQCAIMEVVLATIKQYFHAGGNGLKKNFLEKSPDLQSLRYALSLYTQTTDALIKKFIDTQTSQSRSSKDAVGQISVHVDITATPGTGDHKVTVKVIAINDLNWQTTAMFRPFVEVCILGPNLGDKKRKQGTKTKSNTWSPKYNETFQFILGKENRPGAYELHLSVKDYCFAREDRIIGMTVIQLQNIAEKGSYGAWYPLLKNISMDETGLTILRILSQRTSDDVAKEFVRLKSETRSTEESA</sequence>
<feature type="chain" id="PRO_0000188578" description="Protein unc-13 homolog C">
    <location>
        <begin position="1"/>
        <end position="2214"/>
    </location>
</feature>
<feature type="domain" description="C2 1" evidence="4">
    <location>
        <begin position="1203"/>
        <end position="1327"/>
    </location>
</feature>
<feature type="domain" description="MHD1" evidence="6">
    <location>
        <begin position="1637"/>
        <end position="1780"/>
    </location>
</feature>
<feature type="domain" description="MHD2" evidence="7">
    <location>
        <begin position="1886"/>
        <end position="2028"/>
    </location>
</feature>
<feature type="domain" description="C2 2" evidence="4">
    <location>
        <begin position="2044"/>
        <end position="2169"/>
    </location>
</feature>
<feature type="zinc finger region" description="Phorbol-ester/DAG-type" evidence="5">
    <location>
        <begin position="1097"/>
        <end position="1147"/>
    </location>
</feature>
<feature type="region of interest" description="Disordered" evidence="8">
    <location>
        <begin position="29"/>
        <end position="50"/>
    </location>
</feature>
<feature type="region of interest" description="Disordered" evidence="8">
    <location>
        <begin position="128"/>
        <end position="174"/>
    </location>
</feature>
<feature type="region of interest" description="Disordered" evidence="8">
    <location>
        <begin position="434"/>
        <end position="458"/>
    </location>
</feature>
<feature type="region of interest" description="Disordered" evidence="8">
    <location>
        <begin position="471"/>
        <end position="518"/>
    </location>
</feature>
<feature type="region of interest" description="Disordered" evidence="8">
    <location>
        <begin position="598"/>
        <end position="629"/>
    </location>
</feature>
<feature type="region of interest" description="Disordered" evidence="8">
    <location>
        <begin position="706"/>
        <end position="739"/>
    </location>
</feature>
<feature type="region of interest" description="Disordered" evidence="8">
    <location>
        <begin position="761"/>
        <end position="780"/>
    </location>
</feature>
<feature type="coiled-coil region" evidence="3">
    <location>
        <begin position="99"/>
        <end position="135"/>
    </location>
</feature>
<feature type="coiled-coil region" evidence="3">
    <location>
        <begin position="971"/>
        <end position="995"/>
    </location>
</feature>
<feature type="compositionally biased region" description="Basic and acidic residues" evidence="8">
    <location>
        <begin position="31"/>
        <end position="43"/>
    </location>
</feature>
<feature type="compositionally biased region" description="Low complexity" evidence="8">
    <location>
        <begin position="128"/>
        <end position="137"/>
    </location>
</feature>
<feature type="compositionally biased region" description="Polar residues" evidence="8">
    <location>
        <begin position="138"/>
        <end position="147"/>
    </location>
</feature>
<feature type="compositionally biased region" description="Low complexity" evidence="8">
    <location>
        <begin position="156"/>
        <end position="166"/>
    </location>
</feature>
<feature type="compositionally biased region" description="Low complexity" evidence="8">
    <location>
        <begin position="476"/>
        <end position="486"/>
    </location>
</feature>
<feature type="compositionally biased region" description="Polar residues" evidence="8">
    <location>
        <begin position="613"/>
        <end position="629"/>
    </location>
</feature>
<feature type="compositionally biased region" description="Polar residues" evidence="8">
    <location>
        <begin position="712"/>
        <end position="722"/>
    </location>
</feature>
<feature type="binding site" evidence="4">
    <location>
        <position position="1236"/>
    </location>
    <ligand>
        <name>Ca(2+)</name>
        <dbReference type="ChEBI" id="CHEBI:29108"/>
        <label>1</label>
    </ligand>
</feature>
<feature type="binding site" evidence="4">
    <location>
        <position position="1236"/>
    </location>
    <ligand>
        <name>Ca(2+)</name>
        <dbReference type="ChEBI" id="CHEBI:29108"/>
        <label>2</label>
    </ligand>
</feature>
<feature type="binding site" evidence="4">
    <location>
        <position position="1242"/>
    </location>
    <ligand>
        <name>Ca(2+)</name>
        <dbReference type="ChEBI" id="CHEBI:29108"/>
        <label>1</label>
    </ligand>
</feature>
<feature type="binding site" evidence="4">
    <location>
        <position position="1288"/>
    </location>
    <ligand>
        <name>Ca(2+)</name>
        <dbReference type="ChEBI" id="CHEBI:29108"/>
        <label>1</label>
    </ligand>
</feature>
<feature type="binding site" evidence="4">
    <location>
        <position position="1288"/>
    </location>
    <ligand>
        <name>Ca(2+)</name>
        <dbReference type="ChEBI" id="CHEBI:29108"/>
        <label>2</label>
    </ligand>
</feature>
<feature type="binding site" evidence="4">
    <location>
        <position position="1290"/>
    </location>
    <ligand>
        <name>Ca(2+)</name>
        <dbReference type="ChEBI" id="CHEBI:29108"/>
        <label>1</label>
    </ligand>
</feature>
<feature type="binding site" evidence="4">
    <location>
        <position position="1290"/>
    </location>
    <ligand>
        <name>Ca(2+)</name>
        <dbReference type="ChEBI" id="CHEBI:29108"/>
        <label>2</label>
    </ligand>
</feature>
<feature type="binding site" evidence="4">
    <location>
        <position position="1307"/>
    </location>
    <ligand>
        <name>Ca(2+)</name>
        <dbReference type="ChEBI" id="CHEBI:29108"/>
        <label>2</label>
    </ligand>
</feature>
<feature type="modified residue" description="Phosphoserine" evidence="2">
    <location>
        <position position="89"/>
    </location>
</feature>
<feature type="modified residue" description="Phosphoserine" evidence="2">
    <location>
        <position position="448"/>
    </location>
</feature>
<feature type="modified residue" description="Phosphoserine" evidence="2">
    <location>
        <position position="452"/>
    </location>
</feature>
<feature type="modified residue" description="Phosphoserine" evidence="2">
    <location>
        <position position="788"/>
    </location>
</feature>
<feature type="sequence variant" id="VAR_067540" description="Rare variant; may act as a phenotype modifier in EIEE13 patients carrying SCN8A mutations; dbSNP:rs149448818." evidence="9">
    <original>D</original>
    <variation>E</variation>
    <location>
        <position position="304"/>
    </location>
</feature>
<feature type="sequence variant" id="VAR_061873" description="In dbSNP:rs12437941.">
    <original>G</original>
    <variation>S</variation>
    <location>
        <position position="609"/>
    </location>
</feature>
<feature type="sequence variant" id="VAR_052468" description="In dbSNP:rs17731958.">
    <original>S</original>
    <variation>L</variation>
    <location>
        <position position="942"/>
    </location>
</feature>
<feature type="sequence variant" id="VAR_067541" description="Rare variant; may act as a phenotype modifier in EIEE13 patients carrying SCN8A mutations; dbSNP:rs146433220." evidence="9">
    <original>V</original>
    <variation>A</variation>
    <location>
        <position position="2196"/>
    </location>
</feature>
<feature type="sequence conflict" description="In Ref. 4; AAH40740." evidence="10" ref="4">
    <original>S</original>
    <variation>C</variation>
    <location>
        <position position="2036"/>
    </location>
</feature>
<name>UN13C_HUMAN</name>
<organism>
    <name type="scientific">Homo sapiens</name>
    <name type="common">Human</name>
    <dbReference type="NCBI Taxonomy" id="9606"/>
    <lineage>
        <taxon>Eukaryota</taxon>
        <taxon>Metazoa</taxon>
        <taxon>Chordata</taxon>
        <taxon>Craniata</taxon>
        <taxon>Vertebrata</taxon>
        <taxon>Euteleostomi</taxon>
        <taxon>Mammalia</taxon>
        <taxon>Eutheria</taxon>
        <taxon>Euarchontoglires</taxon>
        <taxon>Primates</taxon>
        <taxon>Haplorrhini</taxon>
        <taxon>Catarrhini</taxon>
        <taxon>Hominidae</taxon>
        <taxon>Homo</taxon>
    </lineage>
</organism>
<comment type="function">
    <text evidence="1">May play a role in vesicle maturation during exocytosis as a target of the diacylglycerol second messenger pathway. May be involved in the regulation of synaptic transmission at parallel fiber - Purkinje cell synapses (By similarity).</text>
</comment>
<comment type="cofactor">
    <cofactor evidence="4">
        <name>Ca(2+)</name>
        <dbReference type="ChEBI" id="CHEBI:29108"/>
    </cofactor>
</comment>
<comment type="subunit">
    <text evidence="1">Interacts with STX1A and/or STX1B1, VAMP2 and SNAP25.</text>
</comment>
<comment type="subcellular location">
    <subcellularLocation>
        <location evidence="1">Cytoplasm</location>
    </subcellularLocation>
    <subcellularLocation>
        <location evidence="1">Membrane</location>
        <topology evidence="1">Peripheral membrane protein</topology>
    </subcellularLocation>
    <subcellularLocation>
        <location evidence="1">Presynaptic cell membrane</location>
        <topology evidence="1">Peripheral membrane protein</topology>
    </subcellularLocation>
    <text evidence="1">Localized to presynaptic structures.</text>
</comment>
<comment type="tissue specificity">
    <text>Exclusively expressed in brain.</text>
</comment>
<comment type="domain">
    <text evidence="1">The C2 domains are not involved in calcium-dependent phospholipid binding.</text>
</comment>
<comment type="similarity">
    <text evidence="10">Belongs to the unc-13 family.</text>
</comment>
<comment type="sequence caution" evidence="10">
    <conflict type="erroneous initiation">
        <sequence resource="EMBL-CDS" id="AAH40740"/>
    </conflict>
</comment>
<comment type="sequence caution" evidence="10">
    <conflict type="erroneous initiation">
        <sequence resource="EMBL-CDS" id="BAB70836"/>
    </conflict>
</comment>
<comment type="sequence caution" evidence="10">
    <conflict type="erroneous initiation">
        <sequence resource="EMBL-CDS" id="BAC03675"/>
    </conflict>
</comment>
<comment type="sequence caution" evidence="10">
    <conflict type="miscellaneous discrepancy">
        <sequence resource="EMBL-CDS" id="BAC03675"/>
    </conflict>
    <text>Contaminating sequence. Sequence of unknown origin in the N-terminal part.</text>
</comment>
<keyword id="KW-0106">Calcium</keyword>
<keyword id="KW-1003">Cell membrane</keyword>
<keyword id="KW-0966">Cell projection</keyword>
<keyword id="KW-0175">Coiled coil</keyword>
<keyword id="KW-0963">Cytoplasm</keyword>
<keyword id="KW-0268">Exocytosis</keyword>
<keyword id="KW-0472">Membrane</keyword>
<keyword id="KW-0479">Metal-binding</keyword>
<keyword id="KW-0597">Phosphoprotein</keyword>
<keyword id="KW-1267">Proteomics identification</keyword>
<keyword id="KW-1185">Reference proteome</keyword>
<keyword id="KW-0677">Repeat</keyword>
<keyword id="KW-0770">Synapse</keyword>
<keyword id="KW-0862">Zinc</keyword>
<keyword id="KW-0863">Zinc-finger</keyword>
<protein>
    <recommendedName>
        <fullName>Protein unc-13 homolog C</fullName>
    </recommendedName>
    <alternativeName>
        <fullName>Munc13-3</fullName>
    </alternativeName>
</protein>
<dbReference type="EMBL" id="AC010867">
    <property type="status" value="NOT_ANNOTATED_CDS"/>
    <property type="molecule type" value="Genomic_DNA"/>
</dbReference>
<dbReference type="EMBL" id="AC022302">
    <property type="status" value="NOT_ANNOTATED_CDS"/>
    <property type="molecule type" value="Genomic_DNA"/>
</dbReference>
<dbReference type="EMBL" id="AC034103">
    <property type="status" value="NOT_ANNOTATED_CDS"/>
    <property type="molecule type" value="Genomic_DNA"/>
</dbReference>
<dbReference type="EMBL" id="AC068711">
    <property type="status" value="NOT_ANNOTATED_CDS"/>
    <property type="molecule type" value="Genomic_DNA"/>
</dbReference>
<dbReference type="EMBL" id="AK054981">
    <property type="protein sequence ID" value="BAB70836.1"/>
    <property type="status" value="ALT_INIT"/>
    <property type="molecule type" value="mRNA"/>
</dbReference>
<dbReference type="EMBL" id="AK091491">
    <property type="protein sequence ID" value="BAC03675.1"/>
    <property type="status" value="ALT_INIT"/>
    <property type="molecule type" value="mRNA"/>
</dbReference>
<dbReference type="EMBL" id="AL834407">
    <property type="protein sequence ID" value="CAD39069.2"/>
    <property type="molecule type" value="mRNA"/>
</dbReference>
<dbReference type="EMBL" id="BC040740">
    <property type="protein sequence ID" value="AAH40740.1"/>
    <property type="status" value="ALT_INIT"/>
    <property type="molecule type" value="mRNA"/>
</dbReference>
<dbReference type="CCDS" id="CCDS45264.1"/>
<dbReference type="RefSeq" id="NP_001074003.1">
    <property type="nucleotide sequence ID" value="NM_001080534.3"/>
</dbReference>
<dbReference type="RefSeq" id="XP_005254451.1">
    <property type="nucleotide sequence ID" value="XM_005254394.4"/>
</dbReference>
<dbReference type="RefSeq" id="XP_016877709.1">
    <property type="nucleotide sequence ID" value="XM_017022220.2"/>
</dbReference>
<dbReference type="RefSeq" id="XP_016877710.1">
    <property type="nucleotide sequence ID" value="XM_017022221.2"/>
</dbReference>
<dbReference type="RefSeq" id="XP_016877711.1">
    <property type="nucleotide sequence ID" value="XM_017022222.2"/>
</dbReference>
<dbReference type="RefSeq" id="XP_047288494.1">
    <property type="nucleotide sequence ID" value="XM_047432538.1"/>
</dbReference>
<dbReference type="SMR" id="Q8NB66"/>
<dbReference type="BioGRID" id="136430">
    <property type="interactions" value="11"/>
</dbReference>
<dbReference type="FunCoup" id="Q8NB66">
    <property type="interactions" value="158"/>
</dbReference>
<dbReference type="IntAct" id="Q8NB66">
    <property type="interactions" value="3"/>
</dbReference>
<dbReference type="STRING" id="9606.ENSP00000260323"/>
<dbReference type="GlyGen" id="Q8NB66">
    <property type="glycosylation" value="1 site, 1 O-linked glycan (1 site)"/>
</dbReference>
<dbReference type="iPTMnet" id="Q8NB66"/>
<dbReference type="PhosphoSitePlus" id="Q8NB66"/>
<dbReference type="BioMuta" id="UNC13C"/>
<dbReference type="DMDM" id="148887448"/>
<dbReference type="jPOST" id="Q8NB66"/>
<dbReference type="MassIVE" id="Q8NB66"/>
<dbReference type="PaxDb" id="9606-ENSP00000260323"/>
<dbReference type="PeptideAtlas" id="Q8NB66"/>
<dbReference type="ProteomicsDB" id="72744"/>
<dbReference type="Antibodypedia" id="51911">
    <property type="antibodies" value="33 antibodies from 10 providers"/>
</dbReference>
<dbReference type="Ensembl" id="ENST00000260323.16">
    <property type="protein sequence ID" value="ENSP00000260323.11"/>
    <property type="gene ID" value="ENSG00000137766.18"/>
</dbReference>
<dbReference type="GeneID" id="440279"/>
<dbReference type="KEGG" id="hsa:440279"/>
<dbReference type="MANE-Select" id="ENST00000260323.16">
    <property type="protein sequence ID" value="ENSP00000260323.11"/>
    <property type="RefSeq nucleotide sequence ID" value="NM_001080534.3"/>
    <property type="RefSeq protein sequence ID" value="NP_001074003.1"/>
</dbReference>
<dbReference type="UCSC" id="uc002acm.4">
    <property type="organism name" value="human"/>
</dbReference>
<dbReference type="AGR" id="HGNC:23149"/>
<dbReference type="CTD" id="440279"/>
<dbReference type="DisGeNET" id="440279"/>
<dbReference type="GeneCards" id="UNC13C"/>
<dbReference type="HGNC" id="HGNC:23149">
    <property type="gene designation" value="UNC13C"/>
</dbReference>
<dbReference type="HPA" id="ENSG00000137766">
    <property type="expression patterns" value="Group enriched (brain, retina)"/>
</dbReference>
<dbReference type="MalaCards" id="UNC13C"/>
<dbReference type="MIM" id="614568">
    <property type="type" value="gene"/>
</dbReference>
<dbReference type="neXtProt" id="NX_Q8NB66"/>
<dbReference type="OpenTargets" id="ENSG00000137766"/>
<dbReference type="PharmGKB" id="PA134870087"/>
<dbReference type="VEuPathDB" id="HostDB:ENSG00000137766"/>
<dbReference type="eggNOG" id="KOG1011">
    <property type="taxonomic scope" value="Eukaryota"/>
</dbReference>
<dbReference type="GeneTree" id="ENSGT00940000155174"/>
<dbReference type="HOGENOM" id="CLU_001304_0_0_1"/>
<dbReference type="InParanoid" id="Q8NB66"/>
<dbReference type="OMA" id="AKYMCPS"/>
<dbReference type="OrthoDB" id="5831756at2759"/>
<dbReference type="PAN-GO" id="Q8NB66">
    <property type="GO annotations" value="15 GO annotations based on evolutionary models"/>
</dbReference>
<dbReference type="PhylomeDB" id="Q8NB66"/>
<dbReference type="TreeFam" id="TF312844"/>
<dbReference type="PathwayCommons" id="Q8NB66"/>
<dbReference type="SignaLink" id="Q8NB66"/>
<dbReference type="BioGRID-ORCS" id="440279">
    <property type="hits" value="9 hits in 1144 CRISPR screens"/>
</dbReference>
<dbReference type="ChiTaRS" id="UNC13C">
    <property type="organism name" value="human"/>
</dbReference>
<dbReference type="GenomeRNAi" id="440279"/>
<dbReference type="Pharos" id="Q8NB66">
    <property type="development level" value="Tdark"/>
</dbReference>
<dbReference type="PRO" id="PR:Q8NB66"/>
<dbReference type="Proteomes" id="UP000005640">
    <property type="component" value="Chromosome 15"/>
</dbReference>
<dbReference type="RNAct" id="Q8NB66">
    <property type="molecule type" value="protein"/>
</dbReference>
<dbReference type="Bgee" id="ENSG00000137766">
    <property type="expression patterns" value="Expressed in secondary oocyte and 121 other cell types or tissues"/>
</dbReference>
<dbReference type="ExpressionAtlas" id="Q8NB66">
    <property type="expression patterns" value="baseline and differential"/>
</dbReference>
<dbReference type="GO" id="GO:0044305">
    <property type="term" value="C:calyx of Held"/>
    <property type="evidence" value="ECO:0007669"/>
    <property type="project" value="Ensembl"/>
</dbReference>
<dbReference type="GO" id="GO:0031594">
    <property type="term" value="C:neuromuscular junction"/>
    <property type="evidence" value="ECO:0000318"/>
    <property type="project" value="GO_Central"/>
</dbReference>
<dbReference type="GO" id="GO:0098688">
    <property type="term" value="C:parallel fiber to Purkinje cell synapse"/>
    <property type="evidence" value="ECO:0007669"/>
    <property type="project" value="Ensembl"/>
</dbReference>
<dbReference type="GO" id="GO:0005886">
    <property type="term" value="C:plasma membrane"/>
    <property type="evidence" value="ECO:0000318"/>
    <property type="project" value="GO_Central"/>
</dbReference>
<dbReference type="GO" id="GO:0048786">
    <property type="term" value="C:presynaptic active zone"/>
    <property type="evidence" value="ECO:0000304"/>
    <property type="project" value="ParkinsonsUK-UCL"/>
</dbReference>
<dbReference type="GO" id="GO:0042734">
    <property type="term" value="C:presynaptic membrane"/>
    <property type="evidence" value="ECO:0000318"/>
    <property type="project" value="GO_Central"/>
</dbReference>
<dbReference type="GO" id="GO:0030672">
    <property type="term" value="C:synaptic vesicle membrane"/>
    <property type="evidence" value="ECO:0000318"/>
    <property type="project" value="GO_Central"/>
</dbReference>
<dbReference type="GO" id="GO:0043195">
    <property type="term" value="C:terminal bouton"/>
    <property type="evidence" value="ECO:0000318"/>
    <property type="project" value="GO_Central"/>
</dbReference>
<dbReference type="GO" id="GO:0005509">
    <property type="term" value="F:calcium ion binding"/>
    <property type="evidence" value="ECO:0007669"/>
    <property type="project" value="InterPro"/>
</dbReference>
<dbReference type="GO" id="GO:0005516">
    <property type="term" value="F:calmodulin binding"/>
    <property type="evidence" value="ECO:0000318"/>
    <property type="project" value="GO_Central"/>
</dbReference>
<dbReference type="GO" id="GO:0019992">
    <property type="term" value="F:diacylglycerol binding"/>
    <property type="evidence" value="ECO:0007669"/>
    <property type="project" value="InterPro"/>
</dbReference>
<dbReference type="GO" id="GO:0005543">
    <property type="term" value="F:phospholipid binding"/>
    <property type="evidence" value="ECO:0007669"/>
    <property type="project" value="InterPro"/>
</dbReference>
<dbReference type="GO" id="GO:0017075">
    <property type="term" value="F:syntaxin-1 binding"/>
    <property type="evidence" value="ECO:0000318"/>
    <property type="project" value="GO_Central"/>
</dbReference>
<dbReference type="GO" id="GO:0008270">
    <property type="term" value="F:zinc ion binding"/>
    <property type="evidence" value="ECO:0007669"/>
    <property type="project" value="UniProtKB-KW"/>
</dbReference>
<dbReference type="GO" id="GO:0007268">
    <property type="term" value="P:chemical synaptic transmission"/>
    <property type="evidence" value="ECO:0000250"/>
    <property type="project" value="ParkinsonsUK-UCL"/>
</dbReference>
<dbReference type="GO" id="GO:0061789">
    <property type="term" value="P:dense core granule priming"/>
    <property type="evidence" value="ECO:0000318"/>
    <property type="project" value="GO_Central"/>
</dbReference>
<dbReference type="GO" id="GO:0031914">
    <property type="term" value="P:negative regulation of synaptic plasticity"/>
    <property type="evidence" value="ECO:0007669"/>
    <property type="project" value="Ensembl"/>
</dbReference>
<dbReference type="GO" id="GO:0035249">
    <property type="term" value="P:synaptic transmission, glutamatergic"/>
    <property type="evidence" value="ECO:0000318"/>
    <property type="project" value="GO_Central"/>
</dbReference>
<dbReference type="GO" id="GO:0016081">
    <property type="term" value="P:synaptic vesicle docking"/>
    <property type="evidence" value="ECO:0000318"/>
    <property type="project" value="GO_Central"/>
</dbReference>
<dbReference type="GO" id="GO:0016082">
    <property type="term" value="P:synaptic vesicle priming"/>
    <property type="evidence" value="ECO:0000318"/>
    <property type="project" value="GO_Central"/>
</dbReference>
<dbReference type="CDD" id="cd20859">
    <property type="entry name" value="C1_Munc13-2-like"/>
    <property type="match status" value="1"/>
</dbReference>
<dbReference type="CDD" id="cd04027">
    <property type="entry name" value="C2B_Munc13"/>
    <property type="match status" value="1"/>
</dbReference>
<dbReference type="CDD" id="cd08395">
    <property type="entry name" value="C2C_Munc13"/>
    <property type="match status" value="1"/>
</dbReference>
<dbReference type="FunFam" id="1.10.357.50:FF:000001">
    <property type="entry name" value="Protein unc-13 homolog B"/>
    <property type="match status" value="1"/>
</dbReference>
<dbReference type="FunFam" id="1.20.58.1100:FF:000001">
    <property type="entry name" value="Protein unc-13 homolog B"/>
    <property type="match status" value="1"/>
</dbReference>
<dbReference type="FunFam" id="2.60.40.150:FF:000002">
    <property type="entry name" value="Protein unc-13 homolog B"/>
    <property type="match status" value="1"/>
</dbReference>
<dbReference type="FunFam" id="3.30.60.20:FF:000001">
    <property type="entry name" value="Protein unc-13 homolog B"/>
    <property type="match status" value="1"/>
</dbReference>
<dbReference type="FunFam" id="2.60.40.150:FF:000014">
    <property type="entry name" value="protein unc-13 homolog B"/>
    <property type="match status" value="1"/>
</dbReference>
<dbReference type="FunFam" id="3.30.70.1820:FF:000003">
    <property type="entry name" value="Protein unc-13 homolog C"/>
    <property type="match status" value="1"/>
</dbReference>
<dbReference type="Gene3D" id="1.10.357.50">
    <property type="match status" value="1"/>
</dbReference>
<dbReference type="Gene3D" id="1.20.58.1100">
    <property type="match status" value="1"/>
</dbReference>
<dbReference type="Gene3D" id="3.30.60.20">
    <property type="match status" value="1"/>
</dbReference>
<dbReference type="Gene3D" id="2.60.40.150">
    <property type="entry name" value="C2 domain"/>
    <property type="match status" value="2"/>
</dbReference>
<dbReference type="Gene3D" id="3.30.70.1820">
    <property type="entry name" value="L1 transposable element, RRM domain"/>
    <property type="match status" value="1"/>
</dbReference>
<dbReference type="InterPro" id="IPR046349">
    <property type="entry name" value="C1-like_sf"/>
</dbReference>
<dbReference type="InterPro" id="IPR000008">
    <property type="entry name" value="C2_dom"/>
</dbReference>
<dbReference type="InterPro" id="IPR035892">
    <property type="entry name" value="C2_domain_sf"/>
</dbReference>
<dbReference type="InterPro" id="IPR010439">
    <property type="entry name" value="MUN_dom"/>
</dbReference>
<dbReference type="InterPro" id="IPR014770">
    <property type="entry name" value="Munc13_1"/>
</dbReference>
<dbReference type="InterPro" id="IPR014772">
    <property type="entry name" value="Munc13_dom-2"/>
</dbReference>
<dbReference type="InterPro" id="IPR002219">
    <property type="entry name" value="PE/DAG-bd"/>
</dbReference>
<dbReference type="InterPro" id="IPR027080">
    <property type="entry name" value="Unc-13"/>
</dbReference>
<dbReference type="InterPro" id="IPR037302">
    <property type="entry name" value="Unc-13_C2B"/>
</dbReference>
<dbReference type="PANTHER" id="PTHR10480">
    <property type="entry name" value="PROTEIN UNC-13 HOMOLOG"/>
    <property type="match status" value="1"/>
</dbReference>
<dbReference type="PANTHER" id="PTHR10480:SF2">
    <property type="entry name" value="PROTEIN UNC-13 HOMOLOG C"/>
    <property type="match status" value="1"/>
</dbReference>
<dbReference type="Pfam" id="PF00130">
    <property type="entry name" value="C1_1"/>
    <property type="match status" value="1"/>
</dbReference>
<dbReference type="Pfam" id="PF00168">
    <property type="entry name" value="C2"/>
    <property type="match status" value="2"/>
</dbReference>
<dbReference type="Pfam" id="PF06292">
    <property type="entry name" value="MUN"/>
    <property type="match status" value="1"/>
</dbReference>
<dbReference type="PRINTS" id="PR00360">
    <property type="entry name" value="C2DOMAIN"/>
</dbReference>
<dbReference type="SMART" id="SM00109">
    <property type="entry name" value="C1"/>
    <property type="match status" value="1"/>
</dbReference>
<dbReference type="SMART" id="SM00239">
    <property type="entry name" value="C2"/>
    <property type="match status" value="2"/>
</dbReference>
<dbReference type="SMART" id="SM01145">
    <property type="entry name" value="DUF1041"/>
    <property type="match status" value="1"/>
</dbReference>
<dbReference type="SUPFAM" id="SSF49562">
    <property type="entry name" value="C2 domain (Calcium/lipid-binding domain, CaLB)"/>
    <property type="match status" value="2"/>
</dbReference>
<dbReference type="SUPFAM" id="SSF57889">
    <property type="entry name" value="Cysteine-rich domain"/>
    <property type="match status" value="1"/>
</dbReference>
<dbReference type="PROSITE" id="PS50004">
    <property type="entry name" value="C2"/>
    <property type="match status" value="2"/>
</dbReference>
<dbReference type="PROSITE" id="PS51258">
    <property type="entry name" value="MHD1"/>
    <property type="match status" value="1"/>
</dbReference>
<dbReference type="PROSITE" id="PS51259">
    <property type="entry name" value="MHD2"/>
    <property type="match status" value="1"/>
</dbReference>
<dbReference type="PROSITE" id="PS00479">
    <property type="entry name" value="ZF_DAG_PE_1"/>
    <property type="match status" value="1"/>
</dbReference>
<dbReference type="PROSITE" id="PS50081">
    <property type="entry name" value="ZF_DAG_PE_2"/>
    <property type="match status" value="1"/>
</dbReference>
<accession>Q8NB66</accession>
<accession>Q0P613</accession>
<accession>Q8ND48</accession>
<accession>Q96NP3</accession>
<reference key="1">
    <citation type="journal article" date="2006" name="Nature">
        <title>Analysis of the DNA sequence and duplication history of human chromosome 15.</title>
        <authorList>
            <person name="Zody M.C."/>
            <person name="Garber M."/>
            <person name="Sharpe T."/>
            <person name="Young S.K."/>
            <person name="Rowen L."/>
            <person name="O'Neill K."/>
            <person name="Whittaker C.A."/>
            <person name="Kamal M."/>
            <person name="Chang J.L."/>
            <person name="Cuomo C.A."/>
            <person name="Dewar K."/>
            <person name="FitzGerald M.G."/>
            <person name="Kodira C.D."/>
            <person name="Madan A."/>
            <person name="Qin S."/>
            <person name="Yang X."/>
            <person name="Abbasi N."/>
            <person name="Abouelleil A."/>
            <person name="Arachchi H.M."/>
            <person name="Baradarani L."/>
            <person name="Birditt B."/>
            <person name="Bloom S."/>
            <person name="Bloom T."/>
            <person name="Borowsky M.L."/>
            <person name="Burke J."/>
            <person name="Butler J."/>
            <person name="Cook A."/>
            <person name="DeArellano K."/>
            <person name="DeCaprio D."/>
            <person name="Dorris L. III"/>
            <person name="Dors M."/>
            <person name="Eichler E.E."/>
            <person name="Engels R."/>
            <person name="Fahey J."/>
            <person name="Fleetwood P."/>
            <person name="Friedman C."/>
            <person name="Gearin G."/>
            <person name="Hall J.L."/>
            <person name="Hensley G."/>
            <person name="Johnson E."/>
            <person name="Jones C."/>
            <person name="Kamat A."/>
            <person name="Kaur A."/>
            <person name="Locke D.P."/>
            <person name="Madan A."/>
            <person name="Munson G."/>
            <person name="Jaffe D.B."/>
            <person name="Lui A."/>
            <person name="Macdonald P."/>
            <person name="Mauceli E."/>
            <person name="Naylor J.W."/>
            <person name="Nesbitt R."/>
            <person name="Nicol R."/>
            <person name="O'Leary S.B."/>
            <person name="Ratcliffe A."/>
            <person name="Rounsley S."/>
            <person name="She X."/>
            <person name="Sneddon K.M.B."/>
            <person name="Stewart S."/>
            <person name="Sougnez C."/>
            <person name="Stone S.M."/>
            <person name="Topham K."/>
            <person name="Vincent D."/>
            <person name="Wang S."/>
            <person name="Zimmer A.R."/>
            <person name="Birren B.W."/>
            <person name="Hood L."/>
            <person name="Lander E.S."/>
            <person name="Nusbaum C."/>
        </authorList>
    </citation>
    <scope>NUCLEOTIDE SEQUENCE [LARGE SCALE GENOMIC DNA]</scope>
</reference>
<reference key="2">
    <citation type="journal article" date="2004" name="Nat. Genet.">
        <title>Complete sequencing and characterization of 21,243 full-length human cDNAs.</title>
        <authorList>
            <person name="Ota T."/>
            <person name="Suzuki Y."/>
            <person name="Nishikawa T."/>
            <person name="Otsuki T."/>
            <person name="Sugiyama T."/>
            <person name="Irie R."/>
            <person name="Wakamatsu A."/>
            <person name="Hayashi K."/>
            <person name="Sato H."/>
            <person name="Nagai K."/>
            <person name="Kimura K."/>
            <person name="Makita H."/>
            <person name="Sekine M."/>
            <person name="Obayashi M."/>
            <person name="Nishi T."/>
            <person name="Shibahara T."/>
            <person name="Tanaka T."/>
            <person name="Ishii S."/>
            <person name="Yamamoto J."/>
            <person name="Saito K."/>
            <person name="Kawai Y."/>
            <person name="Isono Y."/>
            <person name="Nakamura Y."/>
            <person name="Nagahari K."/>
            <person name="Murakami K."/>
            <person name="Yasuda T."/>
            <person name="Iwayanagi T."/>
            <person name="Wagatsuma M."/>
            <person name="Shiratori A."/>
            <person name="Sudo H."/>
            <person name="Hosoiri T."/>
            <person name="Kaku Y."/>
            <person name="Kodaira H."/>
            <person name="Kondo H."/>
            <person name="Sugawara M."/>
            <person name="Takahashi M."/>
            <person name="Kanda K."/>
            <person name="Yokoi T."/>
            <person name="Furuya T."/>
            <person name="Kikkawa E."/>
            <person name="Omura Y."/>
            <person name="Abe K."/>
            <person name="Kamihara K."/>
            <person name="Katsuta N."/>
            <person name="Sato K."/>
            <person name="Tanikawa M."/>
            <person name="Yamazaki M."/>
            <person name="Ninomiya K."/>
            <person name="Ishibashi T."/>
            <person name="Yamashita H."/>
            <person name="Murakawa K."/>
            <person name="Fujimori K."/>
            <person name="Tanai H."/>
            <person name="Kimata M."/>
            <person name="Watanabe M."/>
            <person name="Hiraoka S."/>
            <person name="Chiba Y."/>
            <person name="Ishida S."/>
            <person name="Ono Y."/>
            <person name="Takiguchi S."/>
            <person name="Watanabe S."/>
            <person name="Yosida M."/>
            <person name="Hotuta T."/>
            <person name="Kusano J."/>
            <person name="Kanehori K."/>
            <person name="Takahashi-Fujii A."/>
            <person name="Hara H."/>
            <person name="Tanase T.-O."/>
            <person name="Nomura Y."/>
            <person name="Togiya S."/>
            <person name="Komai F."/>
            <person name="Hara R."/>
            <person name="Takeuchi K."/>
            <person name="Arita M."/>
            <person name="Imose N."/>
            <person name="Musashino K."/>
            <person name="Yuuki H."/>
            <person name="Oshima A."/>
            <person name="Sasaki N."/>
            <person name="Aotsuka S."/>
            <person name="Yoshikawa Y."/>
            <person name="Matsunawa H."/>
            <person name="Ichihara T."/>
            <person name="Shiohata N."/>
            <person name="Sano S."/>
            <person name="Moriya S."/>
            <person name="Momiyama H."/>
            <person name="Satoh N."/>
            <person name="Takami S."/>
            <person name="Terashima Y."/>
            <person name="Suzuki O."/>
            <person name="Nakagawa S."/>
            <person name="Senoh A."/>
            <person name="Mizoguchi H."/>
            <person name="Goto Y."/>
            <person name="Shimizu F."/>
            <person name="Wakebe H."/>
            <person name="Hishigaki H."/>
            <person name="Watanabe T."/>
            <person name="Sugiyama A."/>
            <person name="Takemoto M."/>
            <person name="Kawakami B."/>
            <person name="Yamazaki M."/>
            <person name="Watanabe K."/>
            <person name="Kumagai A."/>
            <person name="Itakura S."/>
            <person name="Fukuzumi Y."/>
            <person name="Fujimori Y."/>
            <person name="Komiyama M."/>
            <person name="Tashiro H."/>
            <person name="Tanigami A."/>
            <person name="Fujiwara T."/>
            <person name="Ono T."/>
            <person name="Yamada K."/>
            <person name="Fujii Y."/>
            <person name="Ozaki K."/>
            <person name="Hirao M."/>
            <person name="Ohmori Y."/>
            <person name="Kawabata A."/>
            <person name="Hikiji T."/>
            <person name="Kobatake N."/>
            <person name="Inagaki H."/>
            <person name="Ikema Y."/>
            <person name="Okamoto S."/>
            <person name="Okitani R."/>
            <person name="Kawakami T."/>
            <person name="Noguchi S."/>
            <person name="Itoh T."/>
            <person name="Shigeta K."/>
            <person name="Senba T."/>
            <person name="Matsumura K."/>
            <person name="Nakajima Y."/>
            <person name="Mizuno T."/>
            <person name="Morinaga M."/>
            <person name="Sasaki M."/>
            <person name="Togashi T."/>
            <person name="Oyama M."/>
            <person name="Hata H."/>
            <person name="Watanabe M."/>
            <person name="Komatsu T."/>
            <person name="Mizushima-Sugano J."/>
            <person name="Satoh T."/>
            <person name="Shirai Y."/>
            <person name="Takahashi Y."/>
            <person name="Nakagawa K."/>
            <person name="Okumura K."/>
            <person name="Nagase T."/>
            <person name="Nomura N."/>
            <person name="Kikuchi H."/>
            <person name="Masuho Y."/>
            <person name="Yamashita R."/>
            <person name="Nakai K."/>
            <person name="Yada T."/>
            <person name="Nakamura Y."/>
            <person name="Ohara O."/>
            <person name="Isogai T."/>
            <person name="Sugano S."/>
        </authorList>
    </citation>
    <scope>NUCLEOTIDE SEQUENCE [LARGE SCALE MRNA] OF 1025-1925 AND 2019-2214</scope>
    <source>
        <tissue>Brain</tissue>
        <tissue>Cerebellum</tissue>
    </source>
</reference>
<reference key="3">
    <citation type="journal article" date="2007" name="BMC Genomics">
        <title>The full-ORF clone resource of the German cDNA consortium.</title>
        <authorList>
            <person name="Bechtel S."/>
            <person name="Rosenfelder H."/>
            <person name="Duda A."/>
            <person name="Schmidt C.P."/>
            <person name="Ernst U."/>
            <person name="Wellenreuther R."/>
            <person name="Mehrle A."/>
            <person name="Schuster C."/>
            <person name="Bahr A."/>
            <person name="Bloecker H."/>
            <person name="Heubner D."/>
            <person name="Hoerlein A."/>
            <person name="Michel G."/>
            <person name="Wedler H."/>
            <person name="Koehrer K."/>
            <person name="Ottenwaelder B."/>
            <person name="Poustka A."/>
            <person name="Wiemann S."/>
            <person name="Schupp I."/>
        </authorList>
    </citation>
    <scope>NUCLEOTIDE SEQUENCE [LARGE SCALE MRNA] OF 1580-2214</scope>
    <source>
        <tissue>Brain</tissue>
    </source>
</reference>
<reference key="4">
    <citation type="journal article" date="2004" name="Genome Res.">
        <title>The status, quality, and expansion of the NIH full-length cDNA project: the Mammalian Gene Collection (MGC).</title>
        <authorList>
            <consortium name="The MGC Project Team"/>
        </authorList>
    </citation>
    <scope>NUCLEOTIDE SEQUENCE [LARGE SCALE MRNA] OF 2036-2214</scope>
    <source>
        <tissue>Brain</tissue>
    </source>
</reference>
<reference key="5">
    <citation type="journal article" date="2012" name="Am. J. Hum. Genet.">
        <title>de novo pathogenic SCN8A mutation identified by whole-genome sequencing of a family quartet affected by infantile epileptic encephalopathy and SUDEP.</title>
        <authorList>
            <person name="Veeramah K.R."/>
            <person name="O'Brien J.E."/>
            <person name="Meisler M.H."/>
            <person name="Cheng X."/>
            <person name="Dib-Hajj S.D."/>
            <person name="Waxman S.G."/>
            <person name="Talwar D."/>
            <person name="Girirajan S."/>
            <person name="Eichler E.E."/>
            <person name="Restifo L.L."/>
            <person name="Erickson R.P."/>
            <person name="Hammer M.F."/>
        </authorList>
    </citation>
    <scope>VARIANTS GLU-304 AND ALA-2196</scope>
</reference>